<dbReference type="EMBL" id="AF006265">
    <property type="protein sequence ID" value="AAB61617.1"/>
    <property type="molecule type" value="mRNA"/>
</dbReference>
<dbReference type="EMBL" id="AB007619">
    <property type="protein sequence ID" value="BAA22572.1"/>
    <property type="molecule type" value="mRNA"/>
</dbReference>
<dbReference type="EMBL" id="AY653072">
    <property type="protein sequence ID" value="AAU85838.1"/>
    <property type="molecule type" value="mRNA"/>
</dbReference>
<dbReference type="EMBL" id="AK290651">
    <property type="protein sequence ID" value="BAF83340.1"/>
    <property type="molecule type" value="mRNA"/>
</dbReference>
<dbReference type="EMBL" id="CR456984">
    <property type="protein sequence ID" value="CAG33265.1"/>
    <property type="molecule type" value="mRNA"/>
</dbReference>
<dbReference type="EMBL" id="AC079061">
    <property type="status" value="NOT_ANNOTATED_CDS"/>
    <property type="molecule type" value="Genomic_DNA"/>
</dbReference>
<dbReference type="EMBL" id="AP000427">
    <property type="status" value="NOT_ANNOTATED_CDS"/>
    <property type="molecule type" value="Genomic_DNA"/>
</dbReference>
<dbReference type="EMBL" id="BC005249">
    <property type="protein sequence ID" value="AAH05249.1"/>
    <property type="molecule type" value="mRNA"/>
</dbReference>
<dbReference type="EMBL" id="BC017729">
    <property type="protein sequence ID" value="AAH17729.1"/>
    <property type="molecule type" value="mRNA"/>
</dbReference>
<dbReference type="EMBL" id="BC022506">
    <property type="protein sequence ID" value="AAH22506.1"/>
    <property type="molecule type" value="mRNA"/>
</dbReference>
<dbReference type="CCDS" id="CCDS6313.1">
    <molecule id="O00559-1"/>
</dbReference>
<dbReference type="RefSeq" id="NP_001265867.1">
    <molecule id="O00559-1"/>
    <property type="nucleotide sequence ID" value="NM_001278938.2"/>
</dbReference>
<dbReference type="RefSeq" id="NP_004206.1">
    <molecule id="O00559-1"/>
    <property type="nucleotide sequence ID" value="NM_004215.5"/>
</dbReference>
<dbReference type="RefSeq" id="NP_936056.1">
    <molecule id="O00559-1"/>
    <property type="nucleotide sequence ID" value="NM_198120.3"/>
</dbReference>
<dbReference type="RefSeq" id="XP_016869449.1">
    <molecule id="O00559-1"/>
    <property type="nucleotide sequence ID" value="XM_017013960.2"/>
</dbReference>
<dbReference type="RefSeq" id="XP_047278368.1">
    <molecule id="O00559-1"/>
    <property type="nucleotide sequence ID" value="XM_047422412.1"/>
</dbReference>
<dbReference type="RefSeq" id="XP_047278369.1">
    <molecule id="O00559-1"/>
    <property type="nucleotide sequence ID" value="XM_047422413.1"/>
</dbReference>
<dbReference type="RefSeq" id="XP_054217468.1">
    <molecule id="O00559-1"/>
    <property type="nucleotide sequence ID" value="XM_054361493.1"/>
</dbReference>
<dbReference type="RefSeq" id="XP_054217469.1">
    <molecule id="O00559-1"/>
    <property type="nucleotide sequence ID" value="XM_054361494.1"/>
</dbReference>
<dbReference type="SMR" id="O00559"/>
<dbReference type="BioGRID" id="114607">
    <property type="interactions" value="312"/>
</dbReference>
<dbReference type="FunCoup" id="O00559">
    <property type="interactions" value="1234"/>
</dbReference>
<dbReference type="IntAct" id="O00559">
    <property type="interactions" value="32"/>
</dbReference>
<dbReference type="STRING" id="9606.ENSP00000337675"/>
<dbReference type="iPTMnet" id="O00559"/>
<dbReference type="PhosphoSitePlus" id="O00559"/>
<dbReference type="SwissPalm" id="O00559"/>
<dbReference type="BioMuta" id="EBAG9"/>
<dbReference type="jPOST" id="O00559"/>
<dbReference type="MassIVE" id="O00559"/>
<dbReference type="PaxDb" id="9606-ENSP00000337675"/>
<dbReference type="PeptideAtlas" id="O00559"/>
<dbReference type="ProteomicsDB" id="47973">
    <molecule id="O00559-1"/>
</dbReference>
<dbReference type="ProteomicsDB" id="65861"/>
<dbReference type="Pumba" id="O00559"/>
<dbReference type="Antibodypedia" id="13458">
    <property type="antibodies" value="425 antibodies from 38 providers"/>
</dbReference>
<dbReference type="CPTC" id="O00559">
    <property type="antibodies" value="3 antibodies"/>
</dbReference>
<dbReference type="DNASU" id="9166"/>
<dbReference type="Ensembl" id="ENST00000337573.10">
    <molecule id="O00559-1"/>
    <property type="protein sequence ID" value="ENSP00000337675.5"/>
    <property type="gene ID" value="ENSG00000147654.16"/>
</dbReference>
<dbReference type="Ensembl" id="ENST00000395785.7">
    <molecule id="O00559-1"/>
    <property type="protein sequence ID" value="ENSP00000379131.2"/>
    <property type="gene ID" value="ENSG00000147654.16"/>
</dbReference>
<dbReference type="Ensembl" id="ENST00000531677.5">
    <molecule id="O00559-2"/>
    <property type="protein sequence ID" value="ENSP00000432082.1"/>
    <property type="gene ID" value="ENSG00000147654.16"/>
</dbReference>
<dbReference type="Ensembl" id="ENST00000614147.1">
    <molecule id="O00559-2"/>
    <property type="protein sequence ID" value="ENSP00000477734.1"/>
    <property type="gene ID" value="ENSG00000147654.16"/>
</dbReference>
<dbReference type="Ensembl" id="ENST00000620557.4">
    <molecule id="O00559-1"/>
    <property type="protein sequence ID" value="ENSP00000477645.1"/>
    <property type="gene ID" value="ENSG00000147654.16"/>
</dbReference>
<dbReference type="Ensembl" id="ENST00000699338.1">
    <molecule id="O00559-1"/>
    <property type="protein sequence ID" value="ENSP00000514313.1"/>
    <property type="gene ID" value="ENSG00000147654.16"/>
</dbReference>
<dbReference type="GeneID" id="9166"/>
<dbReference type="KEGG" id="hsa:9166"/>
<dbReference type="MANE-Select" id="ENST00000337573.10">
    <property type="protein sequence ID" value="ENSP00000337675.5"/>
    <property type="RefSeq nucleotide sequence ID" value="NM_004215.5"/>
    <property type="RefSeq protein sequence ID" value="NP_004206.1"/>
</dbReference>
<dbReference type="UCSC" id="uc003ynf.5">
    <molecule id="O00559-1"/>
    <property type="organism name" value="human"/>
</dbReference>
<dbReference type="AGR" id="HGNC:3123"/>
<dbReference type="CTD" id="9166"/>
<dbReference type="DisGeNET" id="9166"/>
<dbReference type="GeneCards" id="EBAG9"/>
<dbReference type="HGNC" id="HGNC:3123">
    <property type="gene designation" value="EBAG9"/>
</dbReference>
<dbReference type="HPA" id="ENSG00000147654">
    <property type="expression patterns" value="Low tissue specificity"/>
</dbReference>
<dbReference type="MIM" id="605772">
    <property type="type" value="gene"/>
</dbReference>
<dbReference type="neXtProt" id="NX_O00559"/>
<dbReference type="OpenTargets" id="ENSG00000147654"/>
<dbReference type="PharmGKB" id="PA27581"/>
<dbReference type="VEuPathDB" id="HostDB:ENSG00000147654"/>
<dbReference type="eggNOG" id="ENOG502QSN4">
    <property type="taxonomic scope" value="Eukaryota"/>
</dbReference>
<dbReference type="GeneTree" id="ENSGT00390000004040"/>
<dbReference type="HOGENOM" id="CLU_094995_0_0_1"/>
<dbReference type="InParanoid" id="O00559"/>
<dbReference type="OMA" id="LGEMENW"/>
<dbReference type="OrthoDB" id="10017216at2759"/>
<dbReference type="PAN-GO" id="O00559">
    <property type="GO annotations" value="1 GO annotation based on evolutionary models"/>
</dbReference>
<dbReference type="PhylomeDB" id="O00559"/>
<dbReference type="TreeFam" id="TF326584"/>
<dbReference type="PathwayCommons" id="O00559"/>
<dbReference type="Reactome" id="R-HSA-9018519">
    <property type="pathway name" value="Estrogen-dependent gene expression"/>
</dbReference>
<dbReference type="SignaLink" id="O00559"/>
<dbReference type="BioGRID-ORCS" id="9166">
    <property type="hits" value="19 hits in 1151 CRISPR screens"/>
</dbReference>
<dbReference type="ChiTaRS" id="EBAG9">
    <property type="organism name" value="human"/>
</dbReference>
<dbReference type="GeneWiki" id="EBAG9"/>
<dbReference type="GenomeRNAi" id="9166"/>
<dbReference type="Pharos" id="O00559">
    <property type="development level" value="Tbio"/>
</dbReference>
<dbReference type="PRO" id="PR:O00559"/>
<dbReference type="Proteomes" id="UP000005640">
    <property type="component" value="Chromosome 8"/>
</dbReference>
<dbReference type="RNAct" id="O00559">
    <property type="molecule type" value="protein"/>
</dbReference>
<dbReference type="Bgee" id="ENSG00000147654">
    <property type="expression patterns" value="Expressed in parotid gland and 212 other cell types or tissues"/>
</dbReference>
<dbReference type="ExpressionAtlas" id="O00559">
    <property type="expression patterns" value="baseline and differential"/>
</dbReference>
<dbReference type="GO" id="GO:0000139">
    <property type="term" value="C:Golgi membrane"/>
    <property type="evidence" value="ECO:0000304"/>
    <property type="project" value="Reactome"/>
</dbReference>
<dbReference type="GO" id="GO:0030141">
    <property type="term" value="C:secretory granule"/>
    <property type="evidence" value="ECO:0000318"/>
    <property type="project" value="GO_Central"/>
</dbReference>
<dbReference type="GO" id="GO:0016505">
    <property type="term" value="F:peptidase activator activity involved in apoptotic process"/>
    <property type="evidence" value="ECO:0000303"/>
    <property type="project" value="UniProtKB"/>
</dbReference>
<dbReference type="GO" id="GO:0090717">
    <property type="term" value="P:adaptive immune memory response involving T cells and B cells"/>
    <property type="evidence" value="ECO:0007669"/>
    <property type="project" value="Ensembl"/>
</dbReference>
<dbReference type="GO" id="GO:0001558">
    <property type="term" value="P:regulation of cell growth"/>
    <property type="evidence" value="ECO:0000303"/>
    <property type="project" value="UniProtKB"/>
</dbReference>
<dbReference type="GO" id="GO:0001913">
    <property type="term" value="P:T cell mediated cytotoxicity"/>
    <property type="evidence" value="ECO:0007669"/>
    <property type="project" value="Ensembl"/>
</dbReference>
<dbReference type="InterPro" id="IPR017025">
    <property type="entry name" value="Cancer-assoc_antigen_RCAS1"/>
</dbReference>
<dbReference type="PANTHER" id="PTHR15208:SF2">
    <property type="entry name" value="RECEPTOR-BINDING CANCER ANTIGEN EXPRESSED ON SISO CELLS"/>
    <property type="match status" value="1"/>
</dbReference>
<dbReference type="PANTHER" id="PTHR15208">
    <property type="entry name" value="RECEPTOR-BINDING CANCER ANTIGEN EXPRESSED ON SISO CELLS CANCER ASSOCIATED SURFACE ANTIGEN RCAS1 ESTROGEN RECEPTOR-BINDING FRAGMENT- ASSOCIATED GENE 9 PROTEIN"/>
    <property type="match status" value="1"/>
</dbReference>
<dbReference type="PIRSF" id="PIRSF034247">
    <property type="entry name" value="RCAS1"/>
    <property type="match status" value="1"/>
</dbReference>
<comment type="function">
    <text evidence="3 4 5">May participate in suppression of cell proliferation and induces apoptotic cell death through activation of interleukin-1-beta converting enzyme (ICE)-like proteases.</text>
</comment>
<comment type="subunit">
    <text>Homodimer.</text>
</comment>
<comment type="interaction">
    <interactant intactId="EBI-8787095">
        <id>O00559</id>
    </interactant>
    <interactant intactId="EBI-2876927">
        <id>Q9ULC5</id>
        <label>ACSL5</label>
    </interactant>
    <organismsDiffer>false</organismsDiffer>
    <experiments>3</experiments>
</comment>
<comment type="interaction">
    <interactant intactId="EBI-8787095">
        <id>O00559</id>
    </interactant>
    <interactant intactId="EBI-4290634">
        <id>Q9BQE5</id>
        <label>APOL2</label>
    </interactant>
    <organismsDiffer>false</organismsDiffer>
    <experiments>3</experiments>
</comment>
<comment type="interaction">
    <interactant intactId="EBI-8787095">
        <id>O00559</id>
    </interactant>
    <interactant intactId="EBI-749464">
        <id>Q12983</id>
        <label>BNIP3</label>
    </interactant>
    <organismsDiffer>false</organismsDiffer>
    <experiments>3</experiments>
</comment>
<comment type="interaction">
    <interactant intactId="EBI-8787095">
        <id>O00559</id>
    </interactant>
    <interactant intactId="EBI-11579371">
        <id>Q9BXR6</id>
        <label>CFHR5</label>
    </interactant>
    <organismsDiffer>false</organismsDiffer>
    <experiments>3</experiments>
</comment>
<comment type="interaction">
    <interactant intactId="EBI-8787095">
        <id>O00559</id>
    </interactant>
    <interactant intactId="EBI-752069">
        <id>Q9H5X1</id>
        <label>CIAO2A</label>
    </interactant>
    <organismsDiffer>false</organismsDiffer>
    <experiments>3</experiments>
</comment>
<comment type="interaction">
    <interactant intactId="EBI-8787095">
        <id>O00559</id>
    </interactant>
    <interactant intactId="EBI-2114729">
        <id>Q6UXB4</id>
        <label>CLEC4G</label>
    </interactant>
    <organismsDiffer>false</organismsDiffer>
    <experiments>3</experiments>
</comment>
<comment type="interaction">
    <interactant intactId="EBI-8787095">
        <id>O00559</id>
    </interactant>
    <interactant intactId="EBI-6165897">
        <id>Q9NWW5</id>
        <label>CLN6</label>
    </interactant>
    <organismsDiffer>false</organismsDiffer>
    <experiments>3</experiments>
</comment>
<comment type="interaction">
    <interactant intactId="EBI-8787095">
        <id>O00559</id>
    </interactant>
    <interactant intactId="EBI-12866138">
        <id>A0A0C4DFN3</id>
        <label>MGLL</label>
    </interactant>
    <organismsDiffer>false</organismsDiffer>
    <experiments>3</experiments>
</comment>
<comment type="interaction">
    <interactant intactId="EBI-8787095">
        <id>O00559</id>
    </interactant>
    <interactant intactId="EBI-12051377">
        <id>Q8N912</id>
        <label>NRAC</label>
    </interactant>
    <organismsDiffer>false</organismsDiffer>
    <experiments>3</experiments>
</comment>
<comment type="interaction">
    <interactant intactId="EBI-8787095">
        <id>O00559</id>
    </interactant>
    <interactant intactId="EBI-13339917">
        <id>Q8NH19</id>
        <label>OR10AG1</label>
    </interactant>
    <organismsDiffer>false</organismsDiffer>
    <experiments>3</experiments>
</comment>
<comment type="interaction">
    <interactant intactId="EBI-8787095">
        <id>O00559</id>
    </interactant>
    <interactant intactId="EBI-1054848">
        <id>Q9P0S3</id>
        <label>ORMDL1</label>
    </interactant>
    <organismsDiffer>false</organismsDiffer>
    <experiments>3</experiments>
</comment>
<comment type="interaction">
    <interactant intactId="EBI-8787095">
        <id>O00559</id>
    </interactant>
    <interactant intactId="EBI-981985">
        <id>Q9Y5Y5</id>
        <label>PEX16</label>
    </interactant>
    <organismsDiffer>false</organismsDiffer>
    <experiments>3</experiments>
</comment>
<comment type="interaction">
    <interactant intactId="EBI-8787095">
        <id>O00559</id>
    </interactant>
    <interactant intactId="EBI-2506064">
        <id>O60831</id>
        <label>PRAF2</label>
    </interactant>
    <organismsDiffer>false</organismsDiffer>
    <experiments>3</experiments>
</comment>
<comment type="interaction">
    <interactant intactId="EBI-8787095">
        <id>O00559</id>
    </interactant>
    <interactant intactId="EBI-14065960">
        <id>Q96HR9-2</id>
        <label>REEP6</label>
    </interactant>
    <organismsDiffer>false</organismsDiffer>
    <experiments>3</experiments>
</comment>
<comment type="interaction">
    <interactant intactId="EBI-8787095">
        <id>O00559</id>
    </interactant>
    <interactant intactId="EBI-8644112">
        <id>Q9BRI3</id>
        <label>SLC30A2</label>
    </interactant>
    <organismsDiffer>false</organismsDiffer>
    <experiments>3</experiments>
</comment>
<comment type="interaction">
    <interactant intactId="EBI-8787095">
        <id>O00559</id>
    </interactant>
    <interactant intactId="EBI-12870360">
        <id>P78382</id>
        <label>SLC35A1</label>
    </interactant>
    <organismsDiffer>false</organismsDiffer>
    <experiments>3</experiments>
</comment>
<comment type="interaction">
    <interactant intactId="EBI-8787095">
        <id>O00559</id>
    </interactant>
    <interactant intactId="EBI-12363689">
        <id>Q96G79</id>
        <label>SLC35A4</label>
    </interactant>
    <organismsDiffer>false</organismsDiffer>
    <experiments>3</experiments>
</comment>
<comment type="interaction">
    <interactant intactId="EBI-8787095">
        <id>O00559</id>
    </interactant>
    <interactant intactId="EBI-10281213">
        <id>Q969S0</id>
        <label>SLC35B4</label>
    </interactant>
    <organismsDiffer>false</organismsDiffer>
    <experiments>3</experiments>
</comment>
<comment type="interaction">
    <interactant intactId="EBI-8787095">
        <id>O00559</id>
    </interactant>
    <interactant intactId="EBI-712466">
        <id>Q16623</id>
        <label>STX1A</label>
    </interactant>
    <organismsDiffer>false</organismsDiffer>
    <experiments>3</experiments>
</comment>
<comment type="interaction">
    <interactant intactId="EBI-8787095">
        <id>O00559</id>
    </interactant>
    <interactant intactId="EBI-11956649">
        <id>P32856-2</id>
        <label>STX2</label>
    </interactant>
    <organismsDiffer>false</organismsDiffer>
    <experiments>3</experiments>
</comment>
<comment type="interaction">
    <interactant intactId="EBI-8787095">
        <id>O00559</id>
    </interactant>
    <interactant intactId="EBI-1394295">
        <id>Q13277</id>
        <label>STX3</label>
    </interactant>
    <organismsDiffer>false</organismsDiffer>
    <experiments>3</experiments>
</comment>
<comment type="interaction">
    <interactant intactId="EBI-8787095">
        <id>O00559</id>
    </interactant>
    <interactant intactId="EBI-12845616">
        <id>Q6UX40</id>
        <label>TMEM107</label>
    </interactant>
    <organismsDiffer>false</organismsDiffer>
    <experiments>3</experiments>
</comment>
<comment type="interaction">
    <interactant intactId="EBI-8787095">
        <id>O00559</id>
    </interactant>
    <interactant intactId="EBI-17249488">
        <id>Q6ZUI0</id>
        <label>TPRG1</label>
    </interactant>
    <organismsDiffer>false</organismsDiffer>
    <experiments>3</experiments>
</comment>
<comment type="interaction">
    <interactant intactId="EBI-8787095">
        <id>O00559</id>
    </interactant>
    <interactant intactId="EBI-765817">
        <id>Q9Y228</id>
        <label>TRAF3IP3</label>
    </interactant>
    <organismsDiffer>false</organismsDiffer>
    <experiments>3</experiments>
</comment>
<comment type="interaction">
    <interactant intactId="EBI-8787095">
        <id>O00559</id>
    </interactant>
    <interactant intactId="EBI-1059156">
        <id>Q9P0L0</id>
        <label>VAPA</label>
    </interactant>
    <organismsDiffer>false</organismsDiffer>
    <experiments>3</experiments>
</comment>
<comment type="interaction">
    <interactant intactId="EBI-8787095">
        <id>O00559</id>
    </interactant>
    <interactant intactId="EBI-1188298">
        <id>O95292</id>
        <label>VAPB</label>
    </interactant>
    <organismsDiffer>false</organismsDiffer>
    <experiments>3</experiments>
</comment>
<comment type="subcellular location">
    <subcellularLocation>
        <location evidence="5">Golgi apparatus membrane</location>
        <topology evidence="5">Single-pass type III membrane protein</topology>
    </subcellularLocation>
    <text>According to PubMed:10426319, it also exists as a soluble form which has the same biological activities. The existence of such soluble form is however uncertain.</text>
</comment>
<comment type="alternative products">
    <event type="alternative splicing"/>
    <isoform>
        <id>O00559-1</id>
        <name>1</name>
        <sequence type="displayed"/>
    </isoform>
    <isoform>
        <id>O00559-2</id>
        <name>2</name>
        <sequence type="described" ref="VSP_055503"/>
    </isoform>
</comment>
<comment type="tissue specificity">
    <text>Widely expressed. Expressed in ovary, testis, prostate, thymus, muscle and heart, but not in small intestine, colon, lymph nodes, or peripherical blood lymphocytes. The protein is not detected in any of the above organs.</text>
</comment>
<comment type="induction">
    <text>By estrogen.</text>
</comment>
<comment type="domain">
    <text>The coiled coil domain is necessary for the homodimerization.</text>
</comment>
<comment type="miscellaneous">
    <text>May serve as a prognostic marker for cancers such as adenocarcinomas of the lung and breast cancers. It is present and overexpressed in many patients suffering from breast carcinomas, its level of expression correlates with tumor grade, suggesting that it may be involved in cancer immune escape. According to PubMed:12672804, it is however not directly a tumor-associated antigen, but it rather modulates surface expression of tumor-associated O-linked glycan Tn when it is overexpressed, suggesting that it contributes indirectly to the antigenicity of tumor cells.</text>
</comment>
<comment type="caution">
    <text evidence="7">It was initially reported to be a ligand for some putative receptor present on T-, B-, natural killer (NK) cells and various human cell lines. However, PubMed:12672804 showed that it does not bind any receptor.</text>
</comment>
<comment type="online information" name="Atlas of Genetics and Cytogenetics in Oncology and Haematology">
    <link uri="https://atlasgeneticsoncology.org/gene/40393/EBAG9"/>
</comment>
<name>RCAS1_HUMAN</name>
<evidence type="ECO:0000255" key="1"/>
<evidence type="ECO:0000256" key="2">
    <source>
        <dbReference type="SAM" id="MobiDB-lite"/>
    </source>
</evidence>
<evidence type="ECO:0000269" key="3">
    <source>
    </source>
</evidence>
<evidence type="ECO:0000269" key="4">
    <source>
    </source>
</evidence>
<evidence type="ECO:0000269" key="5">
    <source>
    </source>
</evidence>
<evidence type="ECO:0000303" key="6">
    <source ref="3"/>
</evidence>
<evidence type="ECO:0000305" key="7"/>
<evidence type="ECO:0007744" key="8">
    <source>
    </source>
</evidence>
<evidence type="ECO:0007744" key="9">
    <source>
    </source>
</evidence>
<evidence type="ECO:0007744" key="10">
    <source>
    </source>
</evidence>
<evidence type="ECO:0007744" key="11">
    <source>
    </source>
</evidence>
<evidence type="ECO:0007744" key="12">
    <source>
    </source>
</evidence>
<evidence type="ECO:0007744" key="13">
    <source>
    </source>
</evidence>
<evidence type="ECO:0007744" key="14">
    <source>
    </source>
</evidence>
<evidence type="ECO:0007744" key="15">
    <source>
    </source>
</evidence>
<evidence type="ECO:0007744" key="16">
    <source>
    </source>
</evidence>
<evidence type="ECO:0007744" key="17">
    <source>
    </source>
</evidence>
<evidence type="ECO:0007744" key="18">
    <source>
    </source>
</evidence>
<evidence type="ECO:0007744" key="19">
    <source>
    </source>
</evidence>
<gene>
    <name type="primary">EBAG9</name>
    <name type="synonym">RCAS1</name>
</gene>
<protein>
    <recommendedName>
        <fullName>Receptor-binding cancer antigen expressed on SiSo cells</fullName>
    </recommendedName>
    <alternativeName>
        <fullName>Cancer-associated surface antigen RCAS1</fullName>
    </alternativeName>
    <alternativeName>
        <fullName>Estrogen receptor-binding fragment-associated gene 9 protein</fullName>
    </alternativeName>
</protein>
<feature type="chain" id="PRO_0000097195" description="Receptor-binding cancer antigen expressed on SiSo cells">
    <location>
        <begin position="1"/>
        <end position="213"/>
    </location>
</feature>
<feature type="topological domain" description="Extracellular" evidence="1">
    <location>
        <begin position="1"/>
        <end position="6"/>
    </location>
</feature>
<feature type="transmembrane region" description="Helical; Signal-anchor for type III membrane protein" evidence="1">
    <location>
        <begin position="7"/>
        <end position="27"/>
    </location>
</feature>
<feature type="topological domain" description="Cytoplasmic" evidence="1">
    <location>
        <begin position="28"/>
        <end position="213"/>
    </location>
</feature>
<feature type="region of interest" description="Disordered" evidence="2">
    <location>
        <begin position="178"/>
        <end position="213"/>
    </location>
</feature>
<feature type="coiled-coil region" evidence="1">
    <location>
        <begin position="163"/>
        <end position="211"/>
    </location>
</feature>
<feature type="compositionally biased region" description="Basic and acidic residues" evidence="2">
    <location>
        <begin position="178"/>
        <end position="206"/>
    </location>
</feature>
<feature type="modified residue" description="Phosphoserine" evidence="8 10 11 12 13 14 15 16 17 18 19">
    <location>
        <position position="36"/>
    </location>
</feature>
<feature type="modified residue" description="Phosphothreonine" evidence="8">
    <location>
        <position position="41"/>
    </location>
</feature>
<feature type="modified residue" description="Phosphotyrosine" evidence="9">
    <location>
        <position position="94"/>
    </location>
</feature>
<feature type="splice variant" id="VSP_055503" description="In isoform 2." evidence="6">
    <original>R</original>
    <variation>RSRTNVCLLCSLLFHHPTPTSTPYINQSVKIERVSLGQWSYGKSKE</variation>
    <location>
        <position position="174"/>
    </location>
</feature>
<feature type="sequence conflict" description="In Ref. 7; AAH05249." evidence="7" ref="7">
    <original>K</original>
    <variation>E</variation>
    <location>
        <position position="183"/>
    </location>
</feature>
<feature type="sequence conflict" description="In Ref. 4; BAF83340." evidence="7" ref="4">
    <original>R</original>
    <variation>Q</variation>
    <location>
        <position position="199"/>
    </location>
</feature>
<organism>
    <name type="scientific">Homo sapiens</name>
    <name type="common">Human</name>
    <dbReference type="NCBI Taxonomy" id="9606"/>
    <lineage>
        <taxon>Eukaryota</taxon>
        <taxon>Metazoa</taxon>
        <taxon>Chordata</taxon>
        <taxon>Craniata</taxon>
        <taxon>Vertebrata</taxon>
        <taxon>Euteleostomi</taxon>
        <taxon>Mammalia</taxon>
        <taxon>Eutheria</taxon>
        <taxon>Euarchontoglires</taxon>
        <taxon>Primates</taxon>
        <taxon>Haplorrhini</taxon>
        <taxon>Catarrhini</taxon>
        <taxon>Hominidae</taxon>
        <taxon>Homo</taxon>
    </lineage>
</organism>
<proteinExistence type="evidence at protein level"/>
<sequence length="213" mass="24377">MAITQFRLFKFCTCLATVFSFLKRLICRSGRGRKLSGDQITLPTTVDYSSVPKQTDVEEWTSWDEDAPTSVKIEGGNGNVATQQNSLEQLEPDYFKDMTPTIRKTQKIVIKKREPLNFGIPDGSTGFSSRLAATQDLPFIHQSSELGDLDTWQENTNAWEEEEDAAWQAEEVLRQQKLADREKRAAEQQRKKMEKEAQRLMKKEQNKIGVKLS</sequence>
<reference key="1">
    <citation type="journal article" date="1999" name="Nat. Med.">
        <title>Inhibition of cell growth and induction of apoptotic cell death by the human tumor-associated antigen RCAS1.</title>
        <authorList>
            <person name="Nakashima M."/>
            <person name="Sonoda K."/>
            <person name="Watanabe T."/>
        </authorList>
    </citation>
    <scope>NUCLEOTIDE SEQUENCE [MRNA] (ISOFORM 1)</scope>
    <source>
        <tissue>Uterine adenocarcinoma</tissue>
    </source>
</reference>
<reference key="2">
    <citation type="journal article" date="1998" name="Mol. Cell. Biol.">
        <title>Isolation of estrogen-responsive genes with a CpG island library.</title>
        <authorList>
            <person name="Watanabe T."/>
            <person name="Inoue S."/>
            <person name="Hiroi H."/>
            <person name="Orimo A."/>
            <person name="Kawashima H."/>
            <person name="Muramatsu M."/>
        </authorList>
    </citation>
    <scope>NUCLEOTIDE SEQUENCE [MRNA] (ISOFORM 1)</scope>
    <source>
        <tissue>Mammary cancer</tissue>
    </source>
</reference>
<reference key="3">
    <citation type="submission" date="2004-06" db="EMBL/GenBank/DDBJ databases">
        <authorList>
            <person name="Lo W.Y."/>
            <person name="Hsieh S.L."/>
        </authorList>
    </citation>
    <scope>NUCLEOTIDE SEQUENCE [MRNA] (ISOFORM 2)</scope>
</reference>
<reference key="4">
    <citation type="journal article" date="2004" name="Nat. Genet.">
        <title>Complete sequencing and characterization of 21,243 full-length human cDNAs.</title>
        <authorList>
            <person name="Ota T."/>
            <person name="Suzuki Y."/>
            <person name="Nishikawa T."/>
            <person name="Otsuki T."/>
            <person name="Sugiyama T."/>
            <person name="Irie R."/>
            <person name="Wakamatsu A."/>
            <person name="Hayashi K."/>
            <person name="Sato H."/>
            <person name="Nagai K."/>
            <person name="Kimura K."/>
            <person name="Makita H."/>
            <person name="Sekine M."/>
            <person name="Obayashi M."/>
            <person name="Nishi T."/>
            <person name="Shibahara T."/>
            <person name="Tanaka T."/>
            <person name="Ishii S."/>
            <person name="Yamamoto J."/>
            <person name="Saito K."/>
            <person name="Kawai Y."/>
            <person name="Isono Y."/>
            <person name="Nakamura Y."/>
            <person name="Nagahari K."/>
            <person name="Murakami K."/>
            <person name="Yasuda T."/>
            <person name="Iwayanagi T."/>
            <person name="Wagatsuma M."/>
            <person name="Shiratori A."/>
            <person name="Sudo H."/>
            <person name="Hosoiri T."/>
            <person name="Kaku Y."/>
            <person name="Kodaira H."/>
            <person name="Kondo H."/>
            <person name="Sugawara M."/>
            <person name="Takahashi M."/>
            <person name="Kanda K."/>
            <person name="Yokoi T."/>
            <person name="Furuya T."/>
            <person name="Kikkawa E."/>
            <person name="Omura Y."/>
            <person name="Abe K."/>
            <person name="Kamihara K."/>
            <person name="Katsuta N."/>
            <person name="Sato K."/>
            <person name="Tanikawa M."/>
            <person name="Yamazaki M."/>
            <person name="Ninomiya K."/>
            <person name="Ishibashi T."/>
            <person name="Yamashita H."/>
            <person name="Murakawa K."/>
            <person name="Fujimori K."/>
            <person name="Tanai H."/>
            <person name="Kimata M."/>
            <person name="Watanabe M."/>
            <person name="Hiraoka S."/>
            <person name="Chiba Y."/>
            <person name="Ishida S."/>
            <person name="Ono Y."/>
            <person name="Takiguchi S."/>
            <person name="Watanabe S."/>
            <person name="Yosida M."/>
            <person name="Hotuta T."/>
            <person name="Kusano J."/>
            <person name="Kanehori K."/>
            <person name="Takahashi-Fujii A."/>
            <person name="Hara H."/>
            <person name="Tanase T.-O."/>
            <person name="Nomura Y."/>
            <person name="Togiya S."/>
            <person name="Komai F."/>
            <person name="Hara R."/>
            <person name="Takeuchi K."/>
            <person name="Arita M."/>
            <person name="Imose N."/>
            <person name="Musashino K."/>
            <person name="Yuuki H."/>
            <person name="Oshima A."/>
            <person name="Sasaki N."/>
            <person name="Aotsuka S."/>
            <person name="Yoshikawa Y."/>
            <person name="Matsunawa H."/>
            <person name="Ichihara T."/>
            <person name="Shiohata N."/>
            <person name="Sano S."/>
            <person name="Moriya S."/>
            <person name="Momiyama H."/>
            <person name="Satoh N."/>
            <person name="Takami S."/>
            <person name="Terashima Y."/>
            <person name="Suzuki O."/>
            <person name="Nakagawa S."/>
            <person name="Senoh A."/>
            <person name="Mizoguchi H."/>
            <person name="Goto Y."/>
            <person name="Shimizu F."/>
            <person name="Wakebe H."/>
            <person name="Hishigaki H."/>
            <person name="Watanabe T."/>
            <person name="Sugiyama A."/>
            <person name="Takemoto M."/>
            <person name="Kawakami B."/>
            <person name="Yamazaki M."/>
            <person name="Watanabe K."/>
            <person name="Kumagai A."/>
            <person name="Itakura S."/>
            <person name="Fukuzumi Y."/>
            <person name="Fujimori Y."/>
            <person name="Komiyama M."/>
            <person name="Tashiro H."/>
            <person name="Tanigami A."/>
            <person name="Fujiwara T."/>
            <person name="Ono T."/>
            <person name="Yamada K."/>
            <person name="Fujii Y."/>
            <person name="Ozaki K."/>
            <person name="Hirao M."/>
            <person name="Ohmori Y."/>
            <person name="Kawabata A."/>
            <person name="Hikiji T."/>
            <person name="Kobatake N."/>
            <person name="Inagaki H."/>
            <person name="Ikema Y."/>
            <person name="Okamoto S."/>
            <person name="Okitani R."/>
            <person name="Kawakami T."/>
            <person name="Noguchi S."/>
            <person name="Itoh T."/>
            <person name="Shigeta K."/>
            <person name="Senba T."/>
            <person name="Matsumura K."/>
            <person name="Nakajima Y."/>
            <person name="Mizuno T."/>
            <person name="Morinaga M."/>
            <person name="Sasaki M."/>
            <person name="Togashi T."/>
            <person name="Oyama M."/>
            <person name="Hata H."/>
            <person name="Watanabe M."/>
            <person name="Komatsu T."/>
            <person name="Mizushima-Sugano J."/>
            <person name="Satoh T."/>
            <person name="Shirai Y."/>
            <person name="Takahashi Y."/>
            <person name="Nakagawa K."/>
            <person name="Okumura K."/>
            <person name="Nagase T."/>
            <person name="Nomura N."/>
            <person name="Kikuchi H."/>
            <person name="Masuho Y."/>
            <person name="Yamashita R."/>
            <person name="Nakai K."/>
            <person name="Yada T."/>
            <person name="Nakamura Y."/>
            <person name="Ohara O."/>
            <person name="Isogai T."/>
            <person name="Sugano S."/>
        </authorList>
    </citation>
    <scope>NUCLEOTIDE SEQUENCE [LARGE SCALE MRNA] (ISOFORM 1)</scope>
    <source>
        <tissue>Embryo</tissue>
    </source>
</reference>
<reference key="5">
    <citation type="submission" date="2004-06" db="EMBL/GenBank/DDBJ databases">
        <title>Cloning of human full open reading frames in Gateway(TM) system entry vector (pDONR201).</title>
        <authorList>
            <person name="Ebert L."/>
            <person name="Schick M."/>
            <person name="Neubert P."/>
            <person name="Schatten R."/>
            <person name="Henze S."/>
            <person name="Korn B."/>
        </authorList>
    </citation>
    <scope>NUCLEOTIDE SEQUENCE [LARGE SCALE MRNA] (ISOFORM 1)</scope>
</reference>
<reference key="6">
    <citation type="journal article" date="2006" name="Nature">
        <title>DNA sequence and analysis of human chromosome 8.</title>
        <authorList>
            <person name="Nusbaum C."/>
            <person name="Mikkelsen T.S."/>
            <person name="Zody M.C."/>
            <person name="Asakawa S."/>
            <person name="Taudien S."/>
            <person name="Garber M."/>
            <person name="Kodira C.D."/>
            <person name="Schueler M.G."/>
            <person name="Shimizu A."/>
            <person name="Whittaker C.A."/>
            <person name="Chang J.L."/>
            <person name="Cuomo C.A."/>
            <person name="Dewar K."/>
            <person name="FitzGerald M.G."/>
            <person name="Yang X."/>
            <person name="Allen N.R."/>
            <person name="Anderson S."/>
            <person name="Asakawa T."/>
            <person name="Blechschmidt K."/>
            <person name="Bloom T."/>
            <person name="Borowsky M.L."/>
            <person name="Butler J."/>
            <person name="Cook A."/>
            <person name="Corum B."/>
            <person name="DeArellano K."/>
            <person name="DeCaprio D."/>
            <person name="Dooley K.T."/>
            <person name="Dorris L. III"/>
            <person name="Engels R."/>
            <person name="Gloeckner G."/>
            <person name="Hafez N."/>
            <person name="Hagopian D.S."/>
            <person name="Hall J.L."/>
            <person name="Ishikawa S.K."/>
            <person name="Jaffe D.B."/>
            <person name="Kamat A."/>
            <person name="Kudoh J."/>
            <person name="Lehmann R."/>
            <person name="Lokitsang T."/>
            <person name="Macdonald P."/>
            <person name="Major J.E."/>
            <person name="Matthews C.D."/>
            <person name="Mauceli E."/>
            <person name="Menzel U."/>
            <person name="Mihalev A.H."/>
            <person name="Minoshima S."/>
            <person name="Murayama Y."/>
            <person name="Naylor J.W."/>
            <person name="Nicol R."/>
            <person name="Nguyen C."/>
            <person name="O'Leary S.B."/>
            <person name="O'Neill K."/>
            <person name="Parker S.C.J."/>
            <person name="Polley A."/>
            <person name="Raymond C.K."/>
            <person name="Reichwald K."/>
            <person name="Rodriguez J."/>
            <person name="Sasaki T."/>
            <person name="Schilhabel M."/>
            <person name="Siddiqui R."/>
            <person name="Smith C.L."/>
            <person name="Sneddon T.P."/>
            <person name="Talamas J.A."/>
            <person name="Tenzin P."/>
            <person name="Topham K."/>
            <person name="Venkataraman V."/>
            <person name="Wen G."/>
            <person name="Yamazaki S."/>
            <person name="Young S.K."/>
            <person name="Zeng Q."/>
            <person name="Zimmer A.R."/>
            <person name="Rosenthal A."/>
            <person name="Birren B.W."/>
            <person name="Platzer M."/>
            <person name="Shimizu N."/>
            <person name="Lander E.S."/>
        </authorList>
    </citation>
    <scope>NUCLEOTIDE SEQUENCE [LARGE SCALE GENOMIC DNA]</scope>
</reference>
<reference key="7">
    <citation type="journal article" date="2004" name="Genome Res.">
        <title>The status, quality, and expansion of the NIH full-length cDNA project: the Mammalian Gene Collection (MGC).</title>
        <authorList>
            <consortium name="The MGC Project Team"/>
        </authorList>
    </citation>
    <scope>NUCLEOTIDE SEQUENCE [LARGE SCALE MRNA] (ISOFORM 1)</scope>
    <source>
        <tissue>Brain</tissue>
        <tissue>Lung</tissue>
        <tissue>Placenta</tissue>
    </source>
</reference>
<reference key="8">
    <citation type="journal article" date="2002" name="Biochem. Biophys. Res. Commun.">
        <title>RCAS1 is associated with ductal breast cancer progression.</title>
        <authorList>
            <person name="Rousseau J."/>
            <person name="Tetu B."/>
            <person name="Caron D."/>
            <person name="Malenfant P."/>
            <person name="Cattaruzzi P."/>
            <person name="Audette M."/>
            <person name="Doillon C."/>
            <person name="Tremblay J.P."/>
            <person name="Guerette B."/>
        </authorList>
    </citation>
    <scope>ROLE IN CANCER</scope>
</reference>
<reference key="9">
    <citation type="journal article" date="2002" name="Oncology">
        <title>RCAS1 expression: a potential prognostic marker for adenocarcinomas of the lung.</title>
        <authorList>
            <person name="Oizumi S."/>
            <person name="Yamazaki K."/>
            <person name="Nakashima M."/>
            <person name="Watanabe T."/>
            <person name="Hommura F."/>
            <person name="Ogura S."/>
            <person name="Nishimura M."/>
            <person name="Dosaka-Akita H."/>
        </authorList>
    </citation>
    <scope>ROLE IN CANCER</scope>
</reference>
<reference key="10">
    <citation type="journal article" date="2003" name="J. Biol. Chem.">
        <title>The Golgi protein RCAS1 controls cell surface expression of tumor-associated O-linked glycan antigens.</title>
        <authorList>
            <person name="Engelsberg A."/>
            <person name="Hermosilla R."/>
            <person name="Karsten U."/>
            <person name="Schuelein R."/>
            <person name="Doerken B."/>
            <person name="Rehm A."/>
        </authorList>
    </citation>
    <scope>FUNCTION</scope>
    <scope>SUBCELLULAR LOCATION</scope>
</reference>
<reference key="11">
    <citation type="journal article" date="2004" name="Anal. Chem.">
        <title>Robust phosphoproteomic profiling of tyrosine phosphorylation sites from human T cells using immobilized metal affinity chromatography and tandem mass spectrometry.</title>
        <authorList>
            <person name="Brill L.M."/>
            <person name="Salomon A.R."/>
            <person name="Ficarro S.B."/>
            <person name="Mukherji M."/>
            <person name="Stettler-Gill M."/>
            <person name="Peters E.C."/>
        </authorList>
    </citation>
    <scope>PHOSPHORYLATION [LARGE SCALE ANALYSIS] AT SER-36 AND THR-41</scope>
    <scope>IDENTIFICATION BY MASS SPECTROMETRY [LARGE SCALE ANALYSIS]</scope>
    <source>
        <tissue>Leukemic T-cell</tissue>
    </source>
</reference>
<reference key="12">
    <citation type="journal article" date="2005" name="Nat. Biotechnol.">
        <title>Immunoaffinity profiling of tyrosine phosphorylation in cancer cells.</title>
        <authorList>
            <person name="Rush J."/>
            <person name="Moritz A."/>
            <person name="Lee K.A."/>
            <person name="Guo A."/>
            <person name="Goss V.L."/>
            <person name="Spek E.J."/>
            <person name="Zhang H."/>
            <person name="Zha X.-M."/>
            <person name="Polakiewicz R.D."/>
            <person name="Comb M.J."/>
        </authorList>
    </citation>
    <scope>PHOSPHORYLATION [LARGE SCALE ANALYSIS] AT TYR-94</scope>
    <scope>IDENTIFICATION BY MASS SPECTROMETRY [LARGE SCALE ANALYSIS]</scope>
</reference>
<reference key="13">
    <citation type="journal article" date="2006" name="Cell">
        <title>Global, in vivo, and site-specific phosphorylation dynamics in signaling networks.</title>
        <authorList>
            <person name="Olsen J.V."/>
            <person name="Blagoev B."/>
            <person name="Gnad F."/>
            <person name="Macek B."/>
            <person name="Kumar C."/>
            <person name="Mortensen P."/>
            <person name="Mann M."/>
        </authorList>
    </citation>
    <scope>PHOSPHORYLATION [LARGE SCALE ANALYSIS] AT SER-36</scope>
    <scope>IDENTIFICATION BY MASS SPECTROMETRY [LARGE SCALE ANALYSIS]</scope>
    <source>
        <tissue>Cervix carcinoma</tissue>
    </source>
</reference>
<reference key="14">
    <citation type="journal article" date="2008" name="J. Proteome Res.">
        <title>Phosphoproteome of resting human platelets.</title>
        <authorList>
            <person name="Zahedi R.P."/>
            <person name="Lewandrowski U."/>
            <person name="Wiesner J."/>
            <person name="Wortelkamp S."/>
            <person name="Moebius J."/>
            <person name="Schuetz C."/>
            <person name="Walter U."/>
            <person name="Gambaryan S."/>
            <person name="Sickmann A."/>
        </authorList>
    </citation>
    <scope>PHOSPHORYLATION [LARGE SCALE ANALYSIS] AT SER-36</scope>
    <scope>IDENTIFICATION BY MASS SPECTROMETRY [LARGE SCALE ANALYSIS]</scope>
    <source>
        <tissue>Platelet</tissue>
    </source>
</reference>
<reference key="15">
    <citation type="journal article" date="2008" name="Mol. Cell">
        <title>Kinase-selective enrichment enables quantitative phosphoproteomics of the kinome across the cell cycle.</title>
        <authorList>
            <person name="Daub H."/>
            <person name="Olsen J.V."/>
            <person name="Bairlein M."/>
            <person name="Gnad F."/>
            <person name="Oppermann F.S."/>
            <person name="Korner R."/>
            <person name="Greff Z."/>
            <person name="Keri G."/>
            <person name="Stemmann O."/>
            <person name="Mann M."/>
        </authorList>
    </citation>
    <scope>PHOSPHORYLATION [LARGE SCALE ANALYSIS] AT SER-36</scope>
    <scope>IDENTIFICATION BY MASS SPECTROMETRY [LARGE SCALE ANALYSIS]</scope>
    <source>
        <tissue>Cervix carcinoma</tissue>
    </source>
</reference>
<reference key="16">
    <citation type="journal article" date="2008" name="Proc. Natl. Acad. Sci. U.S.A.">
        <title>A quantitative atlas of mitotic phosphorylation.</title>
        <authorList>
            <person name="Dephoure N."/>
            <person name="Zhou C."/>
            <person name="Villen J."/>
            <person name="Beausoleil S.A."/>
            <person name="Bakalarski C.E."/>
            <person name="Elledge S.J."/>
            <person name="Gygi S.P."/>
        </authorList>
    </citation>
    <scope>PHOSPHORYLATION [LARGE SCALE ANALYSIS] AT SER-36</scope>
    <scope>IDENTIFICATION BY MASS SPECTROMETRY [LARGE SCALE ANALYSIS]</scope>
    <source>
        <tissue>Cervix carcinoma</tissue>
    </source>
</reference>
<reference key="17">
    <citation type="journal article" date="2009" name="Mol. Cell. Proteomics">
        <title>Large-scale proteomics analysis of the human kinome.</title>
        <authorList>
            <person name="Oppermann F.S."/>
            <person name="Gnad F."/>
            <person name="Olsen J.V."/>
            <person name="Hornberger R."/>
            <person name="Greff Z."/>
            <person name="Keri G."/>
            <person name="Mann M."/>
            <person name="Daub H."/>
        </authorList>
    </citation>
    <scope>PHOSPHORYLATION [LARGE SCALE ANALYSIS] AT SER-36</scope>
    <scope>IDENTIFICATION BY MASS SPECTROMETRY [LARGE SCALE ANALYSIS]</scope>
</reference>
<reference key="18">
    <citation type="journal article" date="2009" name="Sci. Signal.">
        <title>Quantitative phosphoproteomic analysis of T cell receptor signaling reveals system-wide modulation of protein-protein interactions.</title>
        <authorList>
            <person name="Mayya V."/>
            <person name="Lundgren D.H."/>
            <person name="Hwang S.-I."/>
            <person name="Rezaul K."/>
            <person name="Wu L."/>
            <person name="Eng J.K."/>
            <person name="Rodionov V."/>
            <person name="Han D.K."/>
        </authorList>
    </citation>
    <scope>PHOSPHORYLATION [LARGE SCALE ANALYSIS] AT SER-36</scope>
    <scope>IDENTIFICATION BY MASS SPECTROMETRY [LARGE SCALE ANALYSIS]</scope>
    <source>
        <tissue>Leukemic T-cell</tissue>
    </source>
</reference>
<reference key="19">
    <citation type="journal article" date="2010" name="Sci. Signal.">
        <title>Quantitative phosphoproteomics reveals widespread full phosphorylation site occupancy during mitosis.</title>
        <authorList>
            <person name="Olsen J.V."/>
            <person name="Vermeulen M."/>
            <person name="Santamaria A."/>
            <person name="Kumar C."/>
            <person name="Miller M.L."/>
            <person name="Jensen L.J."/>
            <person name="Gnad F."/>
            <person name="Cox J."/>
            <person name="Jensen T.S."/>
            <person name="Nigg E.A."/>
            <person name="Brunak S."/>
            <person name="Mann M."/>
        </authorList>
    </citation>
    <scope>PHOSPHORYLATION [LARGE SCALE ANALYSIS] AT SER-36</scope>
    <scope>IDENTIFICATION BY MASS SPECTROMETRY [LARGE SCALE ANALYSIS]</scope>
    <source>
        <tissue>Cervix carcinoma</tissue>
    </source>
</reference>
<reference key="20">
    <citation type="journal article" date="2011" name="Sci. Signal.">
        <title>System-wide temporal characterization of the proteome and phosphoproteome of human embryonic stem cell differentiation.</title>
        <authorList>
            <person name="Rigbolt K.T."/>
            <person name="Prokhorova T.A."/>
            <person name="Akimov V."/>
            <person name="Henningsen J."/>
            <person name="Johansen P.T."/>
            <person name="Kratchmarova I."/>
            <person name="Kassem M."/>
            <person name="Mann M."/>
            <person name="Olsen J.V."/>
            <person name="Blagoev B."/>
        </authorList>
    </citation>
    <scope>PHOSPHORYLATION [LARGE SCALE ANALYSIS] AT SER-36</scope>
    <scope>IDENTIFICATION BY MASS SPECTROMETRY [LARGE SCALE ANALYSIS]</scope>
</reference>
<reference key="21">
    <citation type="journal article" date="2012" name="Proc. Natl. Acad. Sci. U.S.A.">
        <title>N-terminal acetylome analyses and functional insights of the N-terminal acetyltransferase NatB.</title>
        <authorList>
            <person name="Van Damme P."/>
            <person name="Lasa M."/>
            <person name="Polevoda B."/>
            <person name="Gazquez C."/>
            <person name="Elosegui-Artola A."/>
            <person name="Kim D.S."/>
            <person name="De Juan-Pardo E."/>
            <person name="Demeyer K."/>
            <person name="Hole K."/>
            <person name="Larrea E."/>
            <person name="Timmerman E."/>
            <person name="Prieto J."/>
            <person name="Arnesen T."/>
            <person name="Sherman F."/>
            <person name="Gevaert K."/>
            <person name="Aldabe R."/>
        </authorList>
    </citation>
    <scope>IDENTIFICATION BY MASS SPECTROMETRY [LARGE SCALE ANALYSIS]</scope>
</reference>
<reference key="22">
    <citation type="journal article" date="2013" name="J. Proteome Res.">
        <title>Toward a comprehensive characterization of a human cancer cell phosphoproteome.</title>
        <authorList>
            <person name="Zhou H."/>
            <person name="Di Palma S."/>
            <person name="Preisinger C."/>
            <person name="Peng M."/>
            <person name="Polat A.N."/>
            <person name="Heck A.J."/>
            <person name="Mohammed S."/>
        </authorList>
    </citation>
    <scope>PHOSPHORYLATION [LARGE SCALE ANALYSIS] AT SER-36</scope>
    <scope>IDENTIFICATION BY MASS SPECTROMETRY [LARGE SCALE ANALYSIS]</scope>
    <source>
        <tissue>Cervix carcinoma</tissue>
        <tissue>Erythroleukemia</tissue>
    </source>
</reference>
<reference key="23">
    <citation type="journal article" date="2014" name="J. Proteomics">
        <title>An enzyme assisted RP-RPLC approach for in-depth analysis of human liver phosphoproteome.</title>
        <authorList>
            <person name="Bian Y."/>
            <person name="Song C."/>
            <person name="Cheng K."/>
            <person name="Dong M."/>
            <person name="Wang F."/>
            <person name="Huang J."/>
            <person name="Sun D."/>
            <person name="Wang L."/>
            <person name="Ye M."/>
            <person name="Zou H."/>
        </authorList>
    </citation>
    <scope>PHOSPHORYLATION [LARGE SCALE ANALYSIS] AT SER-36</scope>
    <scope>IDENTIFICATION BY MASS SPECTROMETRY [LARGE SCALE ANALYSIS]</scope>
    <source>
        <tissue>Liver</tissue>
    </source>
</reference>
<accession>O00559</accession>
<accession>A8K3N6</accession>
<accession>Q5Y8C7</accession>
<accession>Q6IB20</accession>
<accession>Q9BS76</accession>
<keyword id="KW-0025">Alternative splicing</keyword>
<keyword id="KW-0053">Apoptosis</keyword>
<keyword id="KW-0175">Coiled coil</keyword>
<keyword id="KW-0333">Golgi apparatus</keyword>
<keyword id="KW-0472">Membrane</keyword>
<keyword id="KW-0597">Phosphoprotein</keyword>
<keyword id="KW-1267">Proteomics identification</keyword>
<keyword id="KW-1185">Reference proteome</keyword>
<keyword id="KW-0735">Signal-anchor</keyword>
<keyword id="KW-0812">Transmembrane</keyword>
<keyword id="KW-1133">Transmembrane helix</keyword>